<organism>
    <name type="scientific">Shouchella clausii (strain KSM-K16)</name>
    <name type="common">Alkalihalobacillus clausii</name>
    <dbReference type="NCBI Taxonomy" id="66692"/>
    <lineage>
        <taxon>Bacteria</taxon>
        <taxon>Bacillati</taxon>
        <taxon>Bacillota</taxon>
        <taxon>Bacilli</taxon>
        <taxon>Bacillales</taxon>
        <taxon>Bacillaceae</taxon>
        <taxon>Shouchella</taxon>
    </lineage>
</organism>
<evidence type="ECO:0000255" key="1">
    <source>
        <dbReference type="HAMAP-Rule" id="MF_00095"/>
    </source>
</evidence>
<comment type="similarity">
    <text evidence="1">Belongs to the SfsA family.</text>
</comment>
<protein>
    <recommendedName>
        <fullName evidence="1">Sugar fermentation stimulation protein homolog</fullName>
    </recommendedName>
</protein>
<proteinExistence type="inferred from homology"/>
<feature type="chain" id="PRO_0000152270" description="Sugar fermentation stimulation protein homolog">
    <location>
        <begin position="1"/>
        <end position="232"/>
    </location>
</feature>
<gene>
    <name evidence="1" type="primary">sfsA</name>
    <name type="ordered locus">ABC1497</name>
</gene>
<dbReference type="EMBL" id="AP006627">
    <property type="protein sequence ID" value="BAD64032.1"/>
    <property type="molecule type" value="Genomic_DNA"/>
</dbReference>
<dbReference type="RefSeq" id="WP_011246341.1">
    <property type="nucleotide sequence ID" value="NC_006582.1"/>
</dbReference>
<dbReference type="SMR" id="Q5WHX3"/>
<dbReference type="STRING" id="66692.ABC1497"/>
<dbReference type="KEGG" id="bcl:ABC1497"/>
<dbReference type="eggNOG" id="COG1489">
    <property type="taxonomic scope" value="Bacteria"/>
</dbReference>
<dbReference type="HOGENOM" id="CLU_052299_1_0_9"/>
<dbReference type="OrthoDB" id="9802365at2"/>
<dbReference type="Proteomes" id="UP000001168">
    <property type="component" value="Chromosome"/>
</dbReference>
<dbReference type="GO" id="GO:0003677">
    <property type="term" value="F:DNA binding"/>
    <property type="evidence" value="ECO:0007669"/>
    <property type="project" value="InterPro"/>
</dbReference>
<dbReference type="CDD" id="cd22359">
    <property type="entry name" value="SfsA-like_bacterial"/>
    <property type="match status" value="1"/>
</dbReference>
<dbReference type="Gene3D" id="2.40.50.580">
    <property type="match status" value="1"/>
</dbReference>
<dbReference type="Gene3D" id="3.40.1350.60">
    <property type="match status" value="1"/>
</dbReference>
<dbReference type="HAMAP" id="MF_00095">
    <property type="entry name" value="SfsA"/>
    <property type="match status" value="1"/>
</dbReference>
<dbReference type="InterPro" id="IPR005224">
    <property type="entry name" value="SfsA"/>
</dbReference>
<dbReference type="InterPro" id="IPR040452">
    <property type="entry name" value="SfsA_C"/>
</dbReference>
<dbReference type="InterPro" id="IPR041465">
    <property type="entry name" value="SfsA_N"/>
</dbReference>
<dbReference type="NCBIfam" id="TIGR00230">
    <property type="entry name" value="sfsA"/>
    <property type="match status" value="1"/>
</dbReference>
<dbReference type="PANTHER" id="PTHR30545">
    <property type="entry name" value="SUGAR FERMENTATION STIMULATION PROTEIN A"/>
    <property type="match status" value="1"/>
</dbReference>
<dbReference type="PANTHER" id="PTHR30545:SF2">
    <property type="entry name" value="SUGAR FERMENTATION STIMULATION PROTEIN A"/>
    <property type="match status" value="1"/>
</dbReference>
<dbReference type="Pfam" id="PF03749">
    <property type="entry name" value="SfsA"/>
    <property type="match status" value="1"/>
</dbReference>
<dbReference type="Pfam" id="PF17746">
    <property type="entry name" value="SfsA_N"/>
    <property type="match status" value="1"/>
</dbReference>
<reference key="1">
    <citation type="submission" date="2003-10" db="EMBL/GenBank/DDBJ databases">
        <title>The complete genome sequence of the alkaliphilic Bacillus clausii KSM-K16.</title>
        <authorList>
            <person name="Takaki Y."/>
            <person name="Kageyama Y."/>
            <person name="Shimamura S."/>
            <person name="Suzuki H."/>
            <person name="Nishi S."/>
            <person name="Hatada Y."/>
            <person name="Kawai S."/>
            <person name="Ito S."/>
            <person name="Horikoshi K."/>
        </authorList>
    </citation>
    <scope>NUCLEOTIDE SEQUENCE [LARGE SCALE GENOMIC DNA]</scope>
    <source>
        <strain>KSM-K16</strain>
    </source>
</reference>
<accession>Q5WHX3</accession>
<keyword id="KW-1185">Reference proteome</keyword>
<name>SFSA_SHOC1</name>
<sequence>MRLPPLTKMQFVHRPNRFVVELKRTDTEENVLAHLPDPGRLRELLVEGAIIWAEPAVDPLRKTAWTAVLCETPGGDLVSLKTTFANQLVEEALASQSLEAFSGWQLEKREATIGQSRFDFLLSKNGRTLVLEVKSVTLARGSKGFFPDAVTKRGAKHVRELTALNLLPEYESAVLFVSQHSNISTVEMESSIDADFAKAIKEANDKGVFISAVSTELSKQNICLKNRIPVVV</sequence>